<gene>
    <name type="primary">ICS2</name>
    <name type="ordered locus">YBR157C</name>
    <name type="ORF">YBR1207</name>
</gene>
<name>ICS2_YEAST</name>
<organism>
    <name type="scientific">Saccharomyces cerevisiae (strain ATCC 204508 / S288c)</name>
    <name type="common">Baker's yeast</name>
    <dbReference type="NCBI Taxonomy" id="559292"/>
    <lineage>
        <taxon>Eukaryota</taxon>
        <taxon>Fungi</taxon>
        <taxon>Dikarya</taxon>
        <taxon>Ascomycota</taxon>
        <taxon>Saccharomycotina</taxon>
        <taxon>Saccharomycetes</taxon>
        <taxon>Saccharomycetales</taxon>
        <taxon>Saccharomycetaceae</taxon>
        <taxon>Saccharomyces</taxon>
    </lineage>
</organism>
<keyword id="KW-0597">Phosphoprotein</keyword>
<keyword id="KW-1185">Reference proteome</keyword>
<proteinExistence type="evidence at protein level"/>
<reference key="1">
    <citation type="journal article" date="1995" name="Yeast">
        <title>Sequence and functional analysis of a 7.2 kb DNA fragment containing four open reading frames located between RPB5 and CDC28 on the right arm of chromosome II.</title>
        <authorList>
            <person name="Rose M."/>
            <person name="Kiesau P."/>
            <person name="Proft M."/>
            <person name="Entian K.-D."/>
        </authorList>
    </citation>
    <scope>NUCLEOTIDE SEQUENCE [GENOMIC DNA]</scope>
</reference>
<reference key="2">
    <citation type="journal article" date="1994" name="EMBO J.">
        <title>Complete DNA sequence of yeast chromosome II.</title>
        <authorList>
            <person name="Feldmann H."/>
            <person name="Aigle M."/>
            <person name="Aljinovic G."/>
            <person name="Andre B."/>
            <person name="Baclet M.C."/>
            <person name="Barthe C."/>
            <person name="Baur A."/>
            <person name="Becam A.-M."/>
            <person name="Biteau N."/>
            <person name="Boles E."/>
            <person name="Brandt T."/>
            <person name="Brendel M."/>
            <person name="Brueckner M."/>
            <person name="Bussereau F."/>
            <person name="Christiansen C."/>
            <person name="Contreras R."/>
            <person name="Crouzet M."/>
            <person name="Cziepluch C."/>
            <person name="Demolis N."/>
            <person name="Delaveau T."/>
            <person name="Doignon F."/>
            <person name="Domdey H."/>
            <person name="Duesterhus S."/>
            <person name="Dubois E."/>
            <person name="Dujon B."/>
            <person name="El Bakkoury M."/>
            <person name="Entian K.-D."/>
            <person name="Feuermann M."/>
            <person name="Fiers W."/>
            <person name="Fobo G.M."/>
            <person name="Fritz C."/>
            <person name="Gassenhuber J."/>
            <person name="Glansdorff N."/>
            <person name="Goffeau A."/>
            <person name="Grivell L.A."/>
            <person name="de Haan M."/>
            <person name="Hein C."/>
            <person name="Herbert C.J."/>
            <person name="Hollenberg C.P."/>
            <person name="Holmstroem K."/>
            <person name="Jacq C."/>
            <person name="Jacquet M."/>
            <person name="Jauniaux J.-C."/>
            <person name="Jonniaux J.-L."/>
            <person name="Kallesoee T."/>
            <person name="Kiesau P."/>
            <person name="Kirchrath L."/>
            <person name="Koetter P."/>
            <person name="Korol S."/>
            <person name="Liebl S."/>
            <person name="Logghe M."/>
            <person name="Lohan A.J.E."/>
            <person name="Louis E.J."/>
            <person name="Li Z.Y."/>
            <person name="Maat M.J."/>
            <person name="Mallet L."/>
            <person name="Mannhaupt G."/>
            <person name="Messenguy F."/>
            <person name="Miosga T."/>
            <person name="Molemans F."/>
            <person name="Mueller S."/>
            <person name="Nasr F."/>
            <person name="Obermaier B."/>
            <person name="Perea J."/>
            <person name="Pierard A."/>
            <person name="Piravandi E."/>
            <person name="Pohl F.M."/>
            <person name="Pohl T.M."/>
            <person name="Potier S."/>
            <person name="Proft M."/>
            <person name="Purnelle B."/>
            <person name="Ramezani Rad M."/>
            <person name="Rieger M."/>
            <person name="Rose M."/>
            <person name="Schaaff-Gerstenschlaeger I."/>
            <person name="Scherens B."/>
            <person name="Schwarzlose C."/>
            <person name="Skala J."/>
            <person name="Slonimski P.P."/>
            <person name="Smits P.H.M."/>
            <person name="Souciet J.-L."/>
            <person name="Steensma H.Y."/>
            <person name="Stucka R."/>
            <person name="Urrestarazu L.A."/>
            <person name="van der Aart Q.J.M."/>
            <person name="Van Dyck L."/>
            <person name="Vassarotti A."/>
            <person name="Vetter I."/>
            <person name="Vierendeels F."/>
            <person name="Vissers S."/>
            <person name="Wagner G."/>
            <person name="de Wergifosse P."/>
            <person name="Wolfe K.H."/>
            <person name="Zagulski M."/>
            <person name="Zimmermann F.K."/>
            <person name="Mewes H.-W."/>
            <person name="Kleine K."/>
        </authorList>
    </citation>
    <scope>NUCLEOTIDE SEQUENCE [LARGE SCALE GENOMIC DNA]</scope>
    <source>
        <strain>ATCC 204508 / S288c</strain>
    </source>
</reference>
<reference key="3">
    <citation type="journal article" date="2014" name="G3 (Bethesda)">
        <title>The reference genome sequence of Saccharomyces cerevisiae: Then and now.</title>
        <authorList>
            <person name="Engel S.R."/>
            <person name="Dietrich F.S."/>
            <person name="Fisk D.G."/>
            <person name="Binkley G."/>
            <person name="Balakrishnan R."/>
            <person name="Costanzo M.C."/>
            <person name="Dwight S.S."/>
            <person name="Hitz B.C."/>
            <person name="Karra K."/>
            <person name="Nash R.S."/>
            <person name="Weng S."/>
            <person name="Wong E.D."/>
            <person name="Lloyd P."/>
            <person name="Skrzypek M.S."/>
            <person name="Miyasato S.R."/>
            <person name="Simison M."/>
            <person name="Cherry J.M."/>
        </authorList>
    </citation>
    <scope>GENOME REANNOTATION</scope>
    <source>
        <strain>ATCC 204508 / S288c</strain>
    </source>
</reference>
<reference key="4">
    <citation type="journal article" date="2003" name="Genome Biol.">
        <title>Reinvestigation of the Saccharomyces cerevisiae genome annotation by comparison to the genome of a related fungus: Ashbya gossypii.</title>
        <authorList>
            <person name="Brachat S."/>
            <person name="Dietrich F.S."/>
            <person name="Voegeli S."/>
            <person name="Zhang Z."/>
            <person name="Stuart L."/>
            <person name="Lerch A."/>
            <person name="Gates K."/>
            <person name="Gaffney T.D."/>
            <person name="Philippsen P."/>
        </authorList>
    </citation>
    <scope>NUCLEOTIDE SEQUENCE [GENOMIC DNA] OF 82-111</scope>
    <source>
        <strain>ATCC 204511 / S288c / AB972</strain>
    </source>
</reference>
<reference key="5">
    <citation type="journal article" date="1999" name="Mol. Gen. Genet.">
        <title>Functional analysis of 150 deletion mutants in Saccharomyces cerevisiae by a systematic approach.</title>
        <authorList>
            <person name="Entian K.-D."/>
            <person name="Schuster T."/>
            <person name="Hegemann J.H."/>
            <person name="Becher D."/>
            <person name="Feldmann H."/>
            <person name="Gueldener U."/>
            <person name="Goetz R."/>
            <person name="Hansen M."/>
            <person name="Hollenberg C.P."/>
            <person name="Jansen G."/>
            <person name="Kramer W."/>
            <person name="Klein S."/>
            <person name="Koetter P."/>
            <person name="Kricke J."/>
            <person name="Launhardt H."/>
            <person name="Mannhaupt G."/>
            <person name="Maierl A."/>
            <person name="Meyer P."/>
            <person name="Mewes W."/>
            <person name="Munder T."/>
            <person name="Niedenthal R.K."/>
            <person name="Ramezani Rad M."/>
            <person name="Roehmer A."/>
            <person name="Roemer A."/>
            <person name="Rose M."/>
            <person name="Schaefer B."/>
            <person name="Siegler M.-L."/>
            <person name="Vetter J."/>
            <person name="Wilhelm N."/>
            <person name="Wolf K."/>
            <person name="Zimmermann F.K."/>
            <person name="Zollner A."/>
            <person name="Hinnen A."/>
        </authorList>
    </citation>
    <scope>DISRUPTION PHENOTYPE</scope>
</reference>
<reference key="6">
    <citation type="journal article" date="2003" name="Nature">
        <title>Sequencing and comparison of yeast species to identify genes and regulatory elements.</title>
        <authorList>
            <person name="Kellis M."/>
            <person name="Patterson N."/>
            <person name="Endrizzi M."/>
            <person name="Birren B.W."/>
            <person name="Lander E.S."/>
        </authorList>
    </citation>
    <scope>IDENTIFICATION OF FRAMESHIFT</scope>
</reference>
<reference key="7">
    <citation type="journal article" date="2005" name="Mol. Cell. Proteomics">
        <title>Quantitative phosphoproteomics applied to the yeast pheromone signaling pathway.</title>
        <authorList>
            <person name="Gruhler A."/>
            <person name="Olsen J.V."/>
            <person name="Mohammed S."/>
            <person name="Mortensen P."/>
            <person name="Faergeman N.J."/>
            <person name="Mann M."/>
            <person name="Jensen O.N."/>
        </authorList>
    </citation>
    <scope>PHOSPHORYLATION [LARGE SCALE ANALYSIS] AT SER-217</scope>
    <scope>IDENTIFICATION BY MASS SPECTROMETRY [LARGE SCALE ANALYSIS]</scope>
    <source>
        <strain>YAL6B</strain>
    </source>
</reference>
<reference key="8">
    <citation type="journal article" date="2009" name="Science">
        <title>Global analysis of Cdk1 substrate phosphorylation sites provides insights into evolution.</title>
        <authorList>
            <person name="Holt L.J."/>
            <person name="Tuch B.B."/>
            <person name="Villen J."/>
            <person name="Johnson A.D."/>
            <person name="Gygi S.P."/>
            <person name="Morgan D.O."/>
        </authorList>
    </citation>
    <scope>IDENTIFICATION BY MASS SPECTROMETRY [LARGE SCALE ANALYSIS]</scope>
</reference>
<reference key="9">
    <citation type="journal article" date="2012" name="Proc. Natl. Acad. Sci. U.S.A.">
        <title>N-terminal acetylome analyses and functional insights of the N-terminal acetyltransferase NatB.</title>
        <authorList>
            <person name="Van Damme P."/>
            <person name="Lasa M."/>
            <person name="Polevoda B."/>
            <person name="Gazquez C."/>
            <person name="Elosegui-Artola A."/>
            <person name="Kim D.S."/>
            <person name="De Juan-Pardo E."/>
            <person name="Demeyer K."/>
            <person name="Hole K."/>
            <person name="Larrea E."/>
            <person name="Timmerman E."/>
            <person name="Prieto J."/>
            <person name="Arnesen T."/>
            <person name="Sherman F."/>
            <person name="Gevaert K."/>
            <person name="Aldabe R."/>
        </authorList>
    </citation>
    <scope>IDENTIFICATION BY MASS SPECTROMETRY [LARGE SCALE ANALYSIS]</scope>
</reference>
<sequence>MGKFEQKERERISTFSFPTTGSQSSTSIKSLGSPLYGRFSSLSSTESQFDSSKQPHEYEKSFYFEESQGEALFNKLKTYSFPGDKDGVKTRRNSSICPRKPNAVSPLRVESNELSSHSHSRSLSHELTKPSGRRKSYHRKSHAISFSRSCKPNFIDGYDSNSSIGVNSRKTSLASSFLDKEYHSSPDTSYTHQMSPKNTIMNTNEQLRRNASGRFGSLKEFAEKNQINIEGKIFAHKVETGDILQPLIDLDIDNK</sequence>
<protein>
    <recommendedName>
        <fullName>Increased copper sensitivity protein 2</fullName>
    </recommendedName>
</protein>
<evidence type="ECO:0000256" key="1">
    <source>
        <dbReference type="SAM" id="MobiDB-lite"/>
    </source>
</evidence>
<evidence type="ECO:0000269" key="2">
    <source>
    </source>
</evidence>
<evidence type="ECO:0000305" key="3"/>
<evidence type="ECO:0007744" key="4">
    <source>
    </source>
</evidence>
<accession>P38284</accession>
<accession>D6VQF2</accession>
<accession>Q86ZT4</accession>
<feature type="chain" id="PRO_0000202499" description="Increased copper sensitivity protein 2">
    <location>
        <begin position="1"/>
        <end position="255"/>
    </location>
</feature>
<feature type="region of interest" description="Disordered" evidence="1">
    <location>
        <begin position="1"/>
        <end position="32"/>
    </location>
</feature>
<feature type="region of interest" description="Disordered" evidence="1">
    <location>
        <begin position="82"/>
        <end position="142"/>
    </location>
</feature>
<feature type="compositionally biased region" description="Basic and acidic residues" evidence="1">
    <location>
        <begin position="1"/>
        <end position="12"/>
    </location>
</feature>
<feature type="compositionally biased region" description="Polar residues" evidence="1">
    <location>
        <begin position="13"/>
        <end position="30"/>
    </location>
</feature>
<feature type="compositionally biased region" description="Basic residues" evidence="1">
    <location>
        <begin position="131"/>
        <end position="142"/>
    </location>
</feature>
<feature type="modified residue" description="Phosphoserine" evidence="4">
    <location>
        <position position="217"/>
    </location>
</feature>
<feature type="sequence conflict" description="In Ref. 1 and 2; CAA85116." evidence="3" ref="1 2">
    <original>T</original>
    <variation>K</variation>
    <location>
        <position position="90"/>
    </location>
</feature>
<comment type="disruption phenotype">
    <text evidence="2">Increases sensitivity to copper.</text>
</comment>
<comment type="sequence caution" evidence="3">
    <conflict type="frameshift">
        <sequence resource="EMBL-CDS" id="CAA85116"/>
    </conflict>
</comment>
<dbReference type="EMBL" id="Z36026">
    <property type="protein sequence ID" value="CAA85116.1"/>
    <property type="status" value="ALT_FRAME"/>
    <property type="molecule type" value="Genomic_DNA"/>
</dbReference>
<dbReference type="EMBL" id="AY260879">
    <property type="protein sequence ID" value="AAP21747.1"/>
    <property type="molecule type" value="Genomic_DNA"/>
</dbReference>
<dbReference type="EMBL" id="BK006936">
    <property type="protein sequence ID" value="DAA07272.1"/>
    <property type="molecule type" value="Genomic_DNA"/>
</dbReference>
<dbReference type="PIR" id="S46028">
    <property type="entry name" value="S46028"/>
</dbReference>
<dbReference type="RefSeq" id="NP_009715.4">
    <property type="nucleotide sequence ID" value="NM_001178505.3"/>
</dbReference>
<dbReference type="BioGRID" id="32856">
    <property type="interactions" value="153"/>
</dbReference>
<dbReference type="DIP" id="DIP-5461N"/>
<dbReference type="FunCoup" id="P38284">
    <property type="interactions" value="153"/>
</dbReference>
<dbReference type="IntAct" id="P38284">
    <property type="interactions" value="7"/>
</dbReference>
<dbReference type="STRING" id="4932.YBR157C"/>
<dbReference type="iPTMnet" id="P38284"/>
<dbReference type="PaxDb" id="4932-YBR157C"/>
<dbReference type="PeptideAtlas" id="P38284"/>
<dbReference type="EnsemblFungi" id="YBR157C_mRNA">
    <property type="protein sequence ID" value="YBR157C"/>
    <property type="gene ID" value="YBR157C"/>
</dbReference>
<dbReference type="GeneID" id="852454"/>
<dbReference type="KEGG" id="sce:YBR157C"/>
<dbReference type="AGR" id="SGD:S000000361"/>
<dbReference type="SGD" id="S000000361">
    <property type="gene designation" value="ICS2"/>
</dbReference>
<dbReference type="VEuPathDB" id="FungiDB:YBR157C"/>
<dbReference type="eggNOG" id="ENOG502SBMR">
    <property type="taxonomic scope" value="Eukaryota"/>
</dbReference>
<dbReference type="HOGENOM" id="CLU_1090511_0_0_1"/>
<dbReference type="InParanoid" id="P38284"/>
<dbReference type="OMA" id="PKNTIMN"/>
<dbReference type="OrthoDB" id="4066875at2759"/>
<dbReference type="BioCyc" id="YEAST:G3O-29107-MONOMER"/>
<dbReference type="BioGRID-ORCS" id="852454">
    <property type="hits" value="3 hits in 10 CRISPR screens"/>
</dbReference>
<dbReference type="PRO" id="PR:P38284"/>
<dbReference type="Proteomes" id="UP000002311">
    <property type="component" value="Chromosome II"/>
</dbReference>
<dbReference type="RNAct" id="P38284">
    <property type="molecule type" value="protein"/>
</dbReference>